<accession>P0CI92</accession>
<comment type="function">
    <text evidence="2">Antimicrobial peptide with potent activity against a range of Gram-positive and Gram-negative bacteria. Has high hemolytic activity against erythrocytes. May act by disrupting the integrity of the bacterial cell membrane.</text>
</comment>
<comment type="subcellular location">
    <subcellularLocation>
        <location evidence="5">Secreted</location>
    </subcellularLocation>
    <subcellularLocation>
        <location evidence="2">Target cell membrane</location>
    </subcellularLocation>
</comment>
<comment type="tissue specificity">
    <text evidence="5">Expressed by the venom gland.</text>
</comment>
<comment type="similarity">
    <text evidence="4">Belongs to the non-disulfide-bridged peptide (NDBP) superfamily. Medium-length antimicrobial peptide (group 3) family. Ponericin-W subfamily.</text>
</comment>
<dbReference type="EMBL" id="GT028820">
    <property type="status" value="NOT_ANNOTATED_CDS"/>
    <property type="molecule type" value="mRNA"/>
</dbReference>
<dbReference type="GO" id="GO:0005576">
    <property type="term" value="C:extracellular region"/>
    <property type="evidence" value="ECO:0007669"/>
    <property type="project" value="UniProtKB-SubCell"/>
</dbReference>
<dbReference type="GO" id="GO:0016020">
    <property type="term" value="C:membrane"/>
    <property type="evidence" value="ECO:0007669"/>
    <property type="project" value="UniProtKB-KW"/>
</dbReference>
<dbReference type="GO" id="GO:0044218">
    <property type="term" value="C:other organism cell membrane"/>
    <property type="evidence" value="ECO:0007669"/>
    <property type="project" value="UniProtKB-KW"/>
</dbReference>
<dbReference type="GO" id="GO:0090729">
    <property type="term" value="F:toxin activity"/>
    <property type="evidence" value="ECO:0007669"/>
    <property type="project" value="UniProtKB-KW"/>
</dbReference>
<dbReference type="GO" id="GO:0042742">
    <property type="term" value="P:defense response to bacterium"/>
    <property type="evidence" value="ECO:0007669"/>
    <property type="project" value="UniProtKB-KW"/>
</dbReference>
<dbReference type="GO" id="GO:0050832">
    <property type="term" value="P:defense response to fungus"/>
    <property type="evidence" value="ECO:0007669"/>
    <property type="project" value="UniProtKB-KW"/>
</dbReference>
<dbReference type="GO" id="GO:0031640">
    <property type="term" value="P:killing of cells of another organism"/>
    <property type="evidence" value="ECO:0007669"/>
    <property type="project" value="UniProtKB-KW"/>
</dbReference>
<organism>
    <name type="scientific">Lychas mucronatus</name>
    <name type="common">Chinese swimming scorpion</name>
    <dbReference type="NCBI Taxonomy" id="172552"/>
    <lineage>
        <taxon>Eukaryota</taxon>
        <taxon>Metazoa</taxon>
        <taxon>Ecdysozoa</taxon>
        <taxon>Arthropoda</taxon>
        <taxon>Chelicerata</taxon>
        <taxon>Arachnida</taxon>
        <taxon>Scorpiones</taxon>
        <taxon>Buthida</taxon>
        <taxon>Buthoidea</taxon>
        <taxon>Buthidae</taxon>
        <taxon>Lychas</taxon>
    </lineage>
</organism>
<keyword id="KW-0044">Antibiotic</keyword>
<keyword id="KW-0929">Antimicrobial</keyword>
<keyword id="KW-0204">Cytolysis</keyword>
<keyword id="KW-0295">Fungicide</keyword>
<keyword id="KW-0354">Hemolysis</keyword>
<keyword id="KW-0472">Membrane</keyword>
<keyword id="KW-0964">Secreted</keyword>
<keyword id="KW-0732">Signal</keyword>
<keyword id="KW-1052">Target cell membrane</keyword>
<keyword id="KW-1053">Target membrane</keyword>
<keyword id="KW-0800">Toxin</keyword>
<feature type="signal peptide" evidence="3">
    <location>
        <begin position="1"/>
        <end position="23"/>
    </location>
</feature>
<feature type="peptide" id="PRO_0000403868" description="Ponericin-W-like 32.2">
    <location>
        <begin position="24"/>
        <end position="48"/>
    </location>
</feature>
<feature type="propeptide" id="PRO_0000403869" evidence="1">
    <location>
        <begin position="49"/>
        <end position="62"/>
    </location>
</feature>
<protein>
    <recommendedName>
        <fullName>Ponericin-W-like 32.2</fullName>
    </recommendedName>
</protein>
<evidence type="ECO:0000250" key="1"/>
<evidence type="ECO:0000250" key="2">
    <source>
        <dbReference type="UniProtKB" id="P0DRB5"/>
    </source>
</evidence>
<evidence type="ECO:0000255" key="3"/>
<evidence type="ECO:0000305" key="4"/>
<evidence type="ECO:0000305" key="5">
    <source>
    </source>
</evidence>
<reference key="1">
    <citation type="journal article" date="2010" name="BMC Genomics">
        <title>Comparative venom gland transcriptome analysis of the scorpion Lychas mucronatus reveals intraspecific toxic gene diversity and new venomous components.</title>
        <authorList>
            <person name="Zhao R."/>
            <person name="Ma Y."/>
            <person name="He Y."/>
            <person name="Di Z."/>
            <person name="Wu Y.-L."/>
            <person name="Cao Z.-J."/>
            <person name="Li W.-X."/>
        </authorList>
    </citation>
    <scope>NUCLEOTIDE SEQUENCE [MRNA]</scope>
    <source>
        <strain>Yunnan</strain>
        <tissue>Venom gland</tissue>
    </source>
</reference>
<name>NDBW2_LYCMC</name>
<proteinExistence type="inferred from homology"/>
<sequence>MKCKKQLLVIFFAYFLVVNESEAIFGSLFSLGSKLLPTVFKLFSRKKQRALMKRDLEDIMDP</sequence>